<sequence>MASPSSFSSQNYKFNVFASFHGPDVRKTLLSHIRLQFNRNGITMFDDQKIVRSATIGPSLVEAIKESRISIVILSKKYASSSWCLDELVEILECKKAMGQIVMTIFYGVDPSDVRKQIGKFGIAFNETCARKTEEERQKWSKALNQVSNIAGEDFLRWDNEAIMIEKIARDVLDKLNATPSRDFDGMVGIEAHLREIKSLLDLDNVEVKIVAIAGPAGIGKTTIARALYGLLSKRFQLSCFVDNLRGSYHSGFDEYGFKLHLQEQFLSKVLNQSGMRICHLGAIKENLSDQRVLIILDDVNKLKQLEALANETTWFGPGSRIVVTTENKELLQQHGINNTYHVGFPSDEDALKILCSYAFKQTSPRHGFEELSESVTKLCGKLPLGLCVVGSSLRGKKEDEWEDVVTRLETILDQDIEDVLRVGYESLDENAQTLFLHIAIFFNKEDGDLVKTMFAESDLDVKYGLKILENRSLIKMKIFSNGDTKIVMHRLLQQMGKRAIQKQEPWERQILIDAREICHVLEHAKGTGWNVHGMSFDISRISEVSIRKKAFKRMPNLQFLKVYKSKDDGNNRMHVPEEMDFPCLLRLLDWKAYPSKSLPPTFNPEHLVELNMHSSQLEYLWQGTQPLKNLKKMDLSQSKNLKQLPDLSNATNLEYLYLMGCESLIEIPSSISHLHKLEMLATVGCINLEVIPAHMNLESLQTVYLGGCSRLRNIPVMSTNIRYLFITNTAVEGVPLCPGLKTLDVSGSRNFKGLLTHLPTSLTTLNLCYTDIERIPDCFKSLHQLKGVNLRGCRRLASLPELPRSLLTLVADDCESLETVFCPLNTLKASFSFANCFKLDREARRAIIQQSFFMGKAVLPGREVPAVFDHRAKGYSLTIRPDGNPYTSFVFCVVVSRNQKSDKTIPPSLLWRRIIAQDEGYPVEVWNRIGDVFKYRTEHLLIFHFDFLEFDNRDIVFEFSSESHDFDIIECGAKVLAEKSIKESYESGSDQAFEDDVVFEPSKAFGDEKYGDCCIL</sequence>
<feature type="chain" id="PRO_0000433376" description="Disease resistance protein RML1B">
    <location>
        <begin position="1"/>
        <end position="1017"/>
    </location>
</feature>
<feature type="domain" description="TIR" evidence="2">
    <location>
        <begin position="12"/>
        <end position="176"/>
    </location>
</feature>
<feature type="domain" description="NB-ARC" evidence="1">
    <location>
        <begin position="191"/>
        <end position="447"/>
    </location>
</feature>
<feature type="repeat" description="LRR 1" evidence="1">
    <location>
        <begin position="539"/>
        <end position="562"/>
    </location>
</feature>
<feature type="repeat" description="LRR 2" evidence="1">
    <location>
        <begin position="583"/>
        <end position="605"/>
    </location>
</feature>
<feature type="repeat" description="LRR 3" evidence="1">
    <location>
        <begin position="606"/>
        <end position="628"/>
    </location>
</feature>
<feature type="repeat" description="LRR 4" evidence="1">
    <location>
        <begin position="629"/>
        <end position="652"/>
    </location>
</feature>
<feature type="repeat" description="LRR 5" evidence="1">
    <location>
        <begin position="654"/>
        <end position="675"/>
    </location>
</feature>
<feature type="repeat" description="LRR 6" evidence="1">
    <location>
        <begin position="676"/>
        <end position="698"/>
    </location>
</feature>
<feature type="repeat" description="LRR 7" evidence="1">
    <location>
        <begin position="699"/>
        <end position="724"/>
    </location>
</feature>
<feature type="repeat" description="LRR 8" evidence="1">
    <location>
        <begin position="738"/>
        <end position="760"/>
    </location>
</feature>
<feature type="repeat" description="LRR 9" evidence="1">
    <location>
        <begin position="761"/>
        <end position="782"/>
    </location>
</feature>
<feature type="repeat" description="LRR 10" evidence="1">
    <location>
        <begin position="784"/>
        <end position="809"/>
    </location>
</feature>
<feature type="active site" evidence="2">
    <location>
        <position position="87"/>
    </location>
</feature>
<feature type="sequence conflict" description="In Ref. 3; BAC43641." evidence="6" ref="3">
    <original>E</original>
    <variation>G</variation>
    <location>
        <position position="312"/>
    </location>
</feature>
<accession>Q9CAK1</accession>
<accession>Q7FKS0</accession>
<protein>
    <recommendedName>
        <fullName evidence="6">Disease resistance protein RML1B</fullName>
        <ecNumber evidence="2">3.2.2.6</ecNumber>
    </recommendedName>
    <alternativeName>
        <fullName evidence="5">Protein RESISTANCE TO LEPTOSPHAERIA MACULANS 1B</fullName>
    </alternativeName>
</protein>
<name>RLM1B_ARATH</name>
<comment type="function">
    <text evidence="3 4">TIR-NB-LRR receptor-like protein that confers resistance to the pathogen Leptosphaeria maculans (blackleg disease).</text>
</comment>
<comment type="catalytic activity">
    <reaction evidence="2">
        <text>NAD(+) + H2O = ADP-D-ribose + nicotinamide + H(+)</text>
        <dbReference type="Rhea" id="RHEA:16301"/>
        <dbReference type="ChEBI" id="CHEBI:15377"/>
        <dbReference type="ChEBI" id="CHEBI:15378"/>
        <dbReference type="ChEBI" id="CHEBI:17154"/>
        <dbReference type="ChEBI" id="CHEBI:57540"/>
        <dbReference type="ChEBI" id="CHEBI:57967"/>
        <dbReference type="EC" id="3.2.2.6"/>
    </reaction>
    <physiologicalReaction direction="left-to-right" evidence="2">
        <dbReference type="Rhea" id="RHEA:16302"/>
    </physiologicalReaction>
</comment>
<comment type="domain">
    <text evidence="2">The TIR domain mediates NAD(+) hydrolase (NADase) activity. Self-association of TIR domains is required for NADase activity.</text>
</comment>
<comment type="disruption phenotype">
    <text evidence="3 4">No visible phenotype under normal growth conditions, but mutant plants are susceptible to the pathogen Leptosphaeria maculans.</text>
</comment>
<evidence type="ECO:0000255" key="1"/>
<evidence type="ECO:0000255" key="2">
    <source>
        <dbReference type="PROSITE-ProRule" id="PRU00204"/>
    </source>
</evidence>
<evidence type="ECO:0000269" key="3">
    <source>
    </source>
</evidence>
<evidence type="ECO:0000269" key="4">
    <source>
    </source>
</evidence>
<evidence type="ECO:0000303" key="5">
    <source>
    </source>
</evidence>
<evidence type="ECO:0000305" key="6"/>
<evidence type="ECO:0000312" key="7">
    <source>
        <dbReference type="Araport" id="AT1G63880"/>
    </source>
</evidence>
<evidence type="ECO:0000312" key="8">
    <source>
        <dbReference type="EMBL" id="AAG52448.1"/>
    </source>
</evidence>
<keyword id="KW-0067">ATP-binding</keyword>
<keyword id="KW-0378">Hydrolase</keyword>
<keyword id="KW-0433">Leucine-rich repeat</keyword>
<keyword id="KW-0520">NAD</keyword>
<keyword id="KW-0547">Nucleotide-binding</keyword>
<keyword id="KW-0611">Plant defense</keyword>
<keyword id="KW-1185">Reference proteome</keyword>
<keyword id="KW-0677">Repeat</keyword>
<reference key="1">
    <citation type="journal article" date="2000" name="Nature">
        <title>Sequence and analysis of chromosome 1 of the plant Arabidopsis thaliana.</title>
        <authorList>
            <person name="Theologis A."/>
            <person name="Ecker J.R."/>
            <person name="Palm C.J."/>
            <person name="Federspiel N.A."/>
            <person name="Kaul S."/>
            <person name="White O."/>
            <person name="Alonso J."/>
            <person name="Altafi H."/>
            <person name="Araujo R."/>
            <person name="Bowman C.L."/>
            <person name="Brooks S.Y."/>
            <person name="Buehler E."/>
            <person name="Chan A."/>
            <person name="Chao Q."/>
            <person name="Chen H."/>
            <person name="Cheuk R.F."/>
            <person name="Chin C.W."/>
            <person name="Chung M.K."/>
            <person name="Conn L."/>
            <person name="Conway A.B."/>
            <person name="Conway A.R."/>
            <person name="Creasy T.H."/>
            <person name="Dewar K."/>
            <person name="Dunn P."/>
            <person name="Etgu P."/>
            <person name="Feldblyum T.V."/>
            <person name="Feng J.-D."/>
            <person name="Fong B."/>
            <person name="Fujii C.Y."/>
            <person name="Gill J.E."/>
            <person name="Goldsmith A.D."/>
            <person name="Haas B."/>
            <person name="Hansen N.F."/>
            <person name="Hughes B."/>
            <person name="Huizar L."/>
            <person name="Hunter J.L."/>
            <person name="Jenkins J."/>
            <person name="Johnson-Hopson C."/>
            <person name="Khan S."/>
            <person name="Khaykin E."/>
            <person name="Kim C.J."/>
            <person name="Koo H.L."/>
            <person name="Kremenetskaia I."/>
            <person name="Kurtz D.B."/>
            <person name="Kwan A."/>
            <person name="Lam B."/>
            <person name="Langin-Hooper S."/>
            <person name="Lee A."/>
            <person name="Lee J.M."/>
            <person name="Lenz C.A."/>
            <person name="Li J.H."/>
            <person name="Li Y.-P."/>
            <person name="Lin X."/>
            <person name="Liu S.X."/>
            <person name="Liu Z.A."/>
            <person name="Luros J.S."/>
            <person name="Maiti R."/>
            <person name="Marziali A."/>
            <person name="Militscher J."/>
            <person name="Miranda M."/>
            <person name="Nguyen M."/>
            <person name="Nierman W.C."/>
            <person name="Osborne B.I."/>
            <person name="Pai G."/>
            <person name="Peterson J."/>
            <person name="Pham P.K."/>
            <person name="Rizzo M."/>
            <person name="Rooney T."/>
            <person name="Rowley D."/>
            <person name="Sakano H."/>
            <person name="Salzberg S.L."/>
            <person name="Schwartz J.R."/>
            <person name="Shinn P."/>
            <person name="Southwick A.M."/>
            <person name="Sun H."/>
            <person name="Tallon L.J."/>
            <person name="Tambunga G."/>
            <person name="Toriumi M.J."/>
            <person name="Town C.D."/>
            <person name="Utterback T."/>
            <person name="Van Aken S."/>
            <person name="Vaysberg M."/>
            <person name="Vysotskaia V.S."/>
            <person name="Walker M."/>
            <person name="Wu D."/>
            <person name="Yu G."/>
            <person name="Fraser C.M."/>
            <person name="Venter J.C."/>
            <person name="Davis R.W."/>
        </authorList>
    </citation>
    <scope>NUCLEOTIDE SEQUENCE [LARGE SCALE GENOMIC DNA]</scope>
    <source>
        <strain>cv. Columbia</strain>
    </source>
</reference>
<reference key="2">
    <citation type="journal article" date="2017" name="Plant J.">
        <title>Araport11: a complete reannotation of the Arabidopsis thaliana reference genome.</title>
        <authorList>
            <person name="Cheng C.Y."/>
            <person name="Krishnakumar V."/>
            <person name="Chan A.P."/>
            <person name="Thibaud-Nissen F."/>
            <person name="Schobel S."/>
            <person name="Town C.D."/>
        </authorList>
    </citation>
    <scope>GENOME REANNOTATION</scope>
    <source>
        <strain>cv. Columbia</strain>
    </source>
</reference>
<reference key="3">
    <citation type="journal article" date="2002" name="Science">
        <title>Functional annotation of a full-length Arabidopsis cDNA collection.</title>
        <authorList>
            <person name="Seki M."/>
            <person name="Narusaka M."/>
            <person name="Kamiya A."/>
            <person name="Ishida J."/>
            <person name="Satou M."/>
            <person name="Sakurai T."/>
            <person name="Nakajima M."/>
            <person name="Enju A."/>
            <person name="Akiyama K."/>
            <person name="Oono Y."/>
            <person name="Muramatsu M."/>
            <person name="Hayashizaki Y."/>
            <person name="Kawai J."/>
            <person name="Carninci P."/>
            <person name="Itoh M."/>
            <person name="Ishii Y."/>
            <person name="Arakawa T."/>
            <person name="Shibata K."/>
            <person name="Shinagawa A."/>
            <person name="Shinozaki K."/>
        </authorList>
    </citation>
    <scope>NUCLEOTIDE SEQUENCE [LARGE SCALE MRNA]</scope>
    <source>
        <strain>cv. Columbia</strain>
    </source>
</reference>
<reference key="4">
    <citation type="journal article" date="2006" name="Plant J.">
        <title>Transgressive segregation reveals two Arabidopsis TIR-NB-LRR resistance genes effective against Leptosphaeria maculans, causal agent of blackleg disease.</title>
        <authorList>
            <person name="Staal J."/>
            <person name="Kaliff M."/>
            <person name="Bohman S."/>
            <person name="Dixelius C."/>
        </authorList>
    </citation>
    <scope>FUNCTION</scope>
    <scope>DISRUPTION PHENOTYPE</scope>
</reference>
<reference key="5">
    <citation type="journal article" date="2009" name="New Phytol.">
        <title>Layers of defense responses to Leptosphaeria maculans below the RLM1- and camalexin-dependent resistances.</title>
        <authorList>
            <person name="Persson M."/>
            <person name="Staal J."/>
            <person name="Oide S."/>
            <person name="Dixelius C."/>
        </authorList>
    </citation>
    <scope>FUNCTION</scope>
    <scope>DISRUPTION PHENOTYPE</scope>
</reference>
<gene>
    <name evidence="5" type="primary">RLM1B</name>
    <name evidence="7" type="ordered locus">At1g63880</name>
    <name evidence="8" type="ORF">T12P18.10</name>
</gene>
<proteinExistence type="evidence at transcript level"/>
<organism>
    <name type="scientific">Arabidopsis thaliana</name>
    <name type="common">Mouse-ear cress</name>
    <dbReference type="NCBI Taxonomy" id="3702"/>
    <lineage>
        <taxon>Eukaryota</taxon>
        <taxon>Viridiplantae</taxon>
        <taxon>Streptophyta</taxon>
        <taxon>Embryophyta</taxon>
        <taxon>Tracheophyta</taxon>
        <taxon>Spermatophyta</taxon>
        <taxon>Magnoliopsida</taxon>
        <taxon>eudicotyledons</taxon>
        <taxon>Gunneridae</taxon>
        <taxon>Pentapetalae</taxon>
        <taxon>rosids</taxon>
        <taxon>malvids</taxon>
        <taxon>Brassicales</taxon>
        <taxon>Brassicaceae</taxon>
        <taxon>Camelineae</taxon>
        <taxon>Arabidopsis</taxon>
    </lineage>
</organism>
<dbReference type="EC" id="3.2.2.6" evidence="2"/>
<dbReference type="EMBL" id="AC010852">
    <property type="protein sequence ID" value="AAG52448.1"/>
    <property type="molecule type" value="Genomic_DNA"/>
</dbReference>
<dbReference type="EMBL" id="CP002684">
    <property type="protein sequence ID" value="AEE34163.1"/>
    <property type="molecule type" value="Genomic_DNA"/>
</dbReference>
<dbReference type="EMBL" id="AK119065">
    <property type="protein sequence ID" value="BAC43641.2"/>
    <property type="molecule type" value="mRNA"/>
</dbReference>
<dbReference type="PIR" id="H96663">
    <property type="entry name" value="H96663"/>
</dbReference>
<dbReference type="RefSeq" id="NP_176572.1">
    <property type="nucleotide sequence ID" value="NM_105062.3"/>
</dbReference>
<dbReference type="SMR" id="Q9CAK1"/>
<dbReference type="FunCoup" id="Q9CAK1">
    <property type="interactions" value="66"/>
</dbReference>
<dbReference type="STRING" id="3702.Q9CAK1"/>
<dbReference type="PaxDb" id="3702-AT1G63880.1"/>
<dbReference type="ProteomicsDB" id="228135"/>
<dbReference type="EnsemblPlants" id="AT1G63880.1">
    <property type="protein sequence ID" value="AT1G63880.1"/>
    <property type="gene ID" value="AT1G63880"/>
</dbReference>
<dbReference type="GeneID" id="842692"/>
<dbReference type="Gramene" id="AT1G63880.1">
    <property type="protein sequence ID" value="AT1G63880.1"/>
    <property type="gene ID" value="AT1G63880"/>
</dbReference>
<dbReference type="KEGG" id="ath:AT1G63880"/>
<dbReference type="Araport" id="AT1G63880"/>
<dbReference type="TAIR" id="AT1G63880"/>
<dbReference type="HOGENOM" id="CLU_001561_0_1_1"/>
<dbReference type="InParanoid" id="Q9CAK1"/>
<dbReference type="PhylomeDB" id="Q9CAK1"/>
<dbReference type="PRO" id="PR:Q9CAK1"/>
<dbReference type="Proteomes" id="UP000006548">
    <property type="component" value="Chromosome 1"/>
</dbReference>
<dbReference type="ExpressionAtlas" id="Q9CAK1">
    <property type="expression patterns" value="baseline and differential"/>
</dbReference>
<dbReference type="GO" id="GO:0043531">
    <property type="term" value="F:ADP binding"/>
    <property type="evidence" value="ECO:0007669"/>
    <property type="project" value="InterPro"/>
</dbReference>
<dbReference type="GO" id="GO:0005524">
    <property type="term" value="F:ATP binding"/>
    <property type="evidence" value="ECO:0007669"/>
    <property type="project" value="UniProtKB-KW"/>
</dbReference>
<dbReference type="GO" id="GO:0016887">
    <property type="term" value="F:ATP hydrolysis activity"/>
    <property type="evidence" value="ECO:0007669"/>
    <property type="project" value="InterPro"/>
</dbReference>
<dbReference type="GO" id="GO:0061809">
    <property type="term" value="F:NAD+ nucleosidase activity, cyclic ADP-ribose generating"/>
    <property type="evidence" value="ECO:0007669"/>
    <property type="project" value="UniProtKB-EC"/>
</dbReference>
<dbReference type="GO" id="GO:0050832">
    <property type="term" value="P:defense response to fungus"/>
    <property type="evidence" value="ECO:0000315"/>
    <property type="project" value="TAIR"/>
</dbReference>
<dbReference type="GO" id="GO:0007165">
    <property type="term" value="P:signal transduction"/>
    <property type="evidence" value="ECO:0007669"/>
    <property type="project" value="InterPro"/>
</dbReference>
<dbReference type="FunFam" id="1.10.8.430:FF:000002">
    <property type="entry name" value="Disease resistance protein (TIR-NBS-LRR class)"/>
    <property type="match status" value="1"/>
</dbReference>
<dbReference type="FunFam" id="3.40.50.10140:FF:000007">
    <property type="entry name" value="Disease resistance protein (TIR-NBS-LRR class)"/>
    <property type="match status" value="1"/>
</dbReference>
<dbReference type="FunFam" id="3.40.50.300:FF:001002">
    <property type="entry name" value="Disease resistance protein (TIR-NBS-LRR class)"/>
    <property type="match status" value="1"/>
</dbReference>
<dbReference type="FunFam" id="3.80.10.10:FF:000386">
    <property type="entry name" value="Disease resistance protein RPS4"/>
    <property type="match status" value="1"/>
</dbReference>
<dbReference type="Gene3D" id="1.10.8.430">
    <property type="entry name" value="Helical domain of apoptotic protease-activating factors"/>
    <property type="match status" value="1"/>
</dbReference>
<dbReference type="Gene3D" id="3.40.50.300">
    <property type="entry name" value="P-loop containing nucleotide triphosphate hydrolases"/>
    <property type="match status" value="1"/>
</dbReference>
<dbReference type="Gene3D" id="3.80.10.10">
    <property type="entry name" value="Ribonuclease Inhibitor"/>
    <property type="match status" value="2"/>
</dbReference>
<dbReference type="Gene3D" id="3.40.50.10140">
    <property type="entry name" value="Toll/interleukin-1 receptor homology (TIR) domain"/>
    <property type="match status" value="1"/>
</dbReference>
<dbReference type="InterPro" id="IPR003593">
    <property type="entry name" value="AAA+_ATPase"/>
</dbReference>
<dbReference type="InterPro" id="IPR042197">
    <property type="entry name" value="Apaf_helical"/>
</dbReference>
<dbReference type="InterPro" id="IPR044974">
    <property type="entry name" value="Disease_R_plants"/>
</dbReference>
<dbReference type="InterPro" id="IPR011713">
    <property type="entry name" value="Leu-rich_rpt_3"/>
</dbReference>
<dbReference type="InterPro" id="IPR032675">
    <property type="entry name" value="LRR_dom_sf"/>
</dbReference>
<dbReference type="InterPro" id="IPR002182">
    <property type="entry name" value="NB-ARC"/>
</dbReference>
<dbReference type="InterPro" id="IPR027417">
    <property type="entry name" value="P-loop_NTPase"/>
</dbReference>
<dbReference type="InterPro" id="IPR000157">
    <property type="entry name" value="TIR_dom"/>
</dbReference>
<dbReference type="InterPro" id="IPR035897">
    <property type="entry name" value="Toll_tir_struct_dom_sf"/>
</dbReference>
<dbReference type="InterPro" id="IPR036390">
    <property type="entry name" value="WH_DNA-bd_sf"/>
</dbReference>
<dbReference type="PANTHER" id="PTHR11017:SF418">
    <property type="entry name" value="DISEASE RESISTANCE PROTEIN (TIR-NBS-LRR CLASS) FAMILY-RELATED"/>
    <property type="match status" value="1"/>
</dbReference>
<dbReference type="PANTHER" id="PTHR11017">
    <property type="entry name" value="LEUCINE-RICH REPEAT-CONTAINING PROTEIN"/>
    <property type="match status" value="1"/>
</dbReference>
<dbReference type="Pfam" id="PF07725">
    <property type="entry name" value="LRR_3"/>
    <property type="match status" value="1"/>
</dbReference>
<dbReference type="Pfam" id="PF00931">
    <property type="entry name" value="NB-ARC"/>
    <property type="match status" value="1"/>
</dbReference>
<dbReference type="Pfam" id="PF01582">
    <property type="entry name" value="TIR"/>
    <property type="match status" value="1"/>
</dbReference>
<dbReference type="Pfam" id="PF23282">
    <property type="entry name" value="WHD_ROQ1"/>
    <property type="match status" value="1"/>
</dbReference>
<dbReference type="PRINTS" id="PR00364">
    <property type="entry name" value="DISEASERSIST"/>
</dbReference>
<dbReference type="SMART" id="SM00382">
    <property type="entry name" value="AAA"/>
    <property type="match status" value="1"/>
</dbReference>
<dbReference type="SMART" id="SM00255">
    <property type="entry name" value="TIR"/>
    <property type="match status" value="1"/>
</dbReference>
<dbReference type="SUPFAM" id="SSF52058">
    <property type="entry name" value="L domain-like"/>
    <property type="match status" value="1"/>
</dbReference>
<dbReference type="SUPFAM" id="SSF52540">
    <property type="entry name" value="P-loop containing nucleoside triphosphate hydrolases"/>
    <property type="match status" value="1"/>
</dbReference>
<dbReference type="SUPFAM" id="SSF52200">
    <property type="entry name" value="Toll/Interleukin receptor TIR domain"/>
    <property type="match status" value="1"/>
</dbReference>
<dbReference type="SUPFAM" id="SSF46785">
    <property type="entry name" value="Winged helix' DNA-binding domain"/>
    <property type="match status" value="1"/>
</dbReference>
<dbReference type="PROSITE" id="PS50104">
    <property type="entry name" value="TIR"/>
    <property type="match status" value="1"/>
</dbReference>